<comment type="function">
    <text evidence="6 9">NADH-dependent flavin oxidoreductase; part of the gene cluster that mediates the biosynthesis of ilicicolin H, a 4-hydroxy-2-pyridonealkaloid that has potent and broad antifungal activities by inhibiting the mitochondrial respiration chain (PubMed:31216742). The biosynthesis of ilicicolin H starts with formation of the tetramic acid by the hybrid PKS-NRPS synthetase iliA with the partnering trans-enoyl reductase iliB since iliA lacks a designated enoylreductase (ER) domain. The cytochrome P450 monooxygenase iliC then catalyzes the ring expansion of the tetramate to the acyclic 2-pyridone. The pericyclase iliD further converts the acyclic 2-pyridone into 8-epi-ilicicolin H. 8-epi-ilicicolin H might then spontaneously convert to ilicicolin H since ilicicolin H is produced in the absence of the epimerase iliE, in contrast to what was observed for the Talaromyces variabilis ilicolin H biosynthetic pathway (Probable) (PubMed:31216742).</text>
</comment>
<comment type="subcellular location">
    <subcellularLocation>
        <location evidence="2">Membrane</location>
        <topology evidence="2">Single-pass membrane protein</topology>
    </subcellularLocation>
</comment>
<comment type="similarity">
    <text evidence="8">Belongs to the NADH:flavin oxidoreductase/NADH oxidase family.</text>
</comment>
<keyword id="KW-0285">Flavoprotein</keyword>
<keyword id="KW-0288">FMN</keyword>
<keyword id="KW-0325">Glycoprotein</keyword>
<keyword id="KW-0472">Membrane</keyword>
<keyword id="KW-0521">NADP</keyword>
<keyword id="KW-0560">Oxidoreductase</keyword>
<keyword id="KW-0812">Transmembrane</keyword>
<keyword id="KW-1133">Transmembrane helix</keyword>
<proteinExistence type="inferred from homology"/>
<sequence>MSEQLGSHITTPSSHDDASKDKRPAAEVVNGSGIFIMADLHTGKPITLKCGLTLPNRLVKAATAESMAPNNTLPDEKFQNLYRHWAEGGWGMVLAGNVQVDANHICTATDLSVDHSLSDSKIVEAWRPWAAACNGNGTVTVMQLCHPGRQSPAGAGKRGLFAKSIAPSAVALQMGSGLVAKAVTALLFGTPREMSVSDIETVVSQFARSARLAAESGFAGVEVHAGHGFLLEQFLSTKSNRRTDAYGGTPAKRARIVVEVLTAIRAVVPAGFCVGLSLNSVDLQSQTELKDCVEQVKLITDAGVDFIEVSGGTFENPTMFLGPEKSRKQAQLGQPLAHEPFFLDFAKAIRPHVPGVPLIVTGGFRSCQGIEETIAGGDADLVGLARPAVVNPLLPKTTVLSPKTTEFGPEIEDGDVTLYAKKTEAPWILKQIGIRAVEVHIDNSVYHNRRHAAKQVRRASVLLQFPSRPSLSVAAVDIDNVISRLSTARPFVFIFLAITVEVNIDTDIAALLLALRPSPELYHLAAAMPPRRSDGSADHDVPDWPKTPHPTPYDILAMRKDDPYTKHRFFQLVKIYHPDRHGHTPAVHRLPHATRLERYRLIVAANDLLSNPSKRSLYDTQGVGWTGDRPPTLNESVRHAEKSWRHQPGNASRNATWEDWERWYDARDGKTRDPMYMSNGVFATLVVMMCMIGAFAQMSRAEQSGTEYLETRDQSNLAIGQQISRTTLVSAGRSKDERVDSFLRERENVAYEFTPSKYDDRTRTEA</sequence>
<accession>P0DO34</accession>
<evidence type="ECO:0000250" key="1">
    <source>
        <dbReference type="UniProtKB" id="P54550"/>
    </source>
</evidence>
<evidence type="ECO:0000255" key="2"/>
<evidence type="ECO:0000255" key="3">
    <source>
        <dbReference type="PROSITE-ProRule" id="PRU00286"/>
    </source>
</evidence>
<evidence type="ECO:0000255" key="4">
    <source>
        <dbReference type="PROSITE-ProRule" id="PRU00498"/>
    </source>
</evidence>
<evidence type="ECO:0000256" key="5">
    <source>
        <dbReference type="SAM" id="MobiDB-lite"/>
    </source>
</evidence>
<evidence type="ECO:0000269" key="6">
    <source>
    </source>
</evidence>
<evidence type="ECO:0000303" key="7">
    <source>
    </source>
</evidence>
<evidence type="ECO:0000305" key="8"/>
<evidence type="ECO:0000305" key="9">
    <source>
    </source>
</evidence>
<organism>
    <name type="scientific">Neonectria sp. (strain DH2)</name>
    <dbReference type="NCBI Taxonomy" id="1735992"/>
    <lineage>
        <taxon>Eukaryota</taxon>
        <taxon>Fungi</taxon>
        <taxon>Dikarya</taxon>
        <taxon>Ascomycota</taxon>
        <taxon>Pezizomycotina</taxon>
        <taxon>Sordariomycetes</taxon>
        <taxon>Hypocreomycetidae</taxon>
        <taxon>Hypocreales</taxon>
        <taxon>Nectriaceae</taxon>
        <taxon>Neonectria</taxon>
    </lineage>
</organism>
<gene>
    <name evidence="7" type="primary">iliE</name>
</gene>
<dbReference type="EC" id="1.-.-.-" evidence="6"/>
<dbReference type="SMR" id="P0DO34"/>
<dbReference type="GlyCosmos" id="P0DO34">
    <property type="glycosylation" value="6 sites, No reported glycans"/>
</dbReference>
<dbReference type="GO" id="GO:0016020">
    <property type="term" value="C:membrane"/>
    <property type="evidence" value="ECO:0007669"/>
    <property type="project" value="UniProtKB-SubCell"/>
</dbReference>
<dbReference type="GO" id="GO:0010181">
    <property type="term" value="F:FMN binding"/>
    <property type="evidence" value="ECO:0007669"/>
    <property type="project" value="InterPro"/>
</dbReference>
<dbReference type="GO" id="GO:0016491">
    <property type="term" value="F:oxidoreductase activity"/>
    <property type="evidence" value="ECO:0007669"/>
    <property type="project" value="UniProtKB-KW"/>
</dbReference>
<dbReference type="CDD" id="cd06257">
    <property type="entry name" value="DnaJ"/>
    <property type="match status" value="1"/>
</dbReference>
<dbReference type="Gene3D" id="3.20.20.70">
    <property type="entry name" value="Aldolase class I"/>
    <property type="match status" value="1"/>
</dbReference>
<dbReference type="Gene3D" id="1.10.287.110">
    <property type="entry name" value="DnaJ domain"/>
    <property type="match status" value="1"/>
</dbReference>
<dbReference type="InterPro" id="IPR013785">
    <property type="entry name" value="Aldolase_TIM"/>
</dbReference>
<dbReference type="InterPro" id="IPR001623">
    <property type="entry name" value="DnaJ_domain"/>
</dbReference>
<dbReference type="InterPro" id="IPR018253">
    <property type="entry name" value="DnaJ_domain_CS"/>
</dbReference>
<dbReference type="InterPro" id="IPR036869">
    <property type="entry name" value="J_dom_sf"/>
</dbReference>
<dbReference type="InterPro" id="IPR051799">
    <property type="entry name" value="NADH_flavin_oxidoreductase"/>
</dbReference>
<dbReference type="InterPro" id="IPR001155">
    <property type="entry name" value="OxRdtase_FMN_N"/>
</dbReference>
<dbReference type="PANTHER" id="PTHR43656">
    <property type="entry name" value="BINDING OXIDOREDUCTASE, PUTATIVE (AFU_ORTHOLOGUE AFUA_2G08260)-RELATED"/>
    <property type="match status" value="1"/>
</dbReference>
<dbReference type="PANTHER" id="PTHR43656:SF2">
    <property type="entry name" value="BINDING OXIDOREDUCTASE, PUTATIVE (AFU_ORTHOLOGUE AFUA_2G08260)-RELATED"/>
    <property type="match status" value="1"/>
</dbReference>
<dbReference type="Pfam" id="PF00724">
    <property type="entry name" value="Oxidored_FMN"/>
    <property type="match status" value="1"/>
</dbReference>
<dbReference type="SMART" id="SM00271">
    <property type="entry name" value="DnaJ"/>
    <property type="match status" value="1"/>
</dbReference>
<dbReference type="SUPFAM" id="SSF46565">
    <property type="entry name" value="Chaperone J-domain"/>
    <property type="match status" value="1"/>
</dbReference>
<dbReference type="SUPFAM" id="SSF51395">
    <property type="entry name" value="FMN-linked oxidoreductases"/>
    <property type="match status" value="1"/>
</dbReference>
<dbReference type="PROSITE" id="PS00636">
    <property type="entry name" value="DNAJ_1"/>
    <property type="match status" value="1"/>
</dbReference>
<dbReference type="PROSITE" id="PS50076">
    <property type="entry name" value="DNAJ_2"/>
    <property type="match status" value="1"/>
</dbReference>
<protein>
    <recommendedName>
        <fullName evidence="7">NADH-dependent flavin oxidoreductase iliE</fullName>
        <ecNumber evidence="6">1.-.-.-</ecNumber>
    </recommendedName>
    <alternativeName>
        <fullName evidence="7">Epimerase iliE</fullName>
    </alternativeName>
    <alternativeName>
        <fullName evidence="7">Ilicicolin H biosynthesis cluster protein E</fullName>
    </alternativeName>
</protein>
<reference key="1">
    <citation type="journal article" date="2019" name="Molecules">
        <title>Heterologous expression of ilicicolin H biosynthetic gene cluster and production of a new potent antifungal reagent, ilicicolin J.</title>
        <authorList>
            <person name="Lin X."/>
            <person name="Yuan S."/>
            <person name="Chen S."/>
            <person name="Chen B."/>
            <person name="Xu H."/>
            <person name="Liu L."/>
            <person name="Li H."/>
            <person name="Gao Z."/>
        </authorList>
    </citation>
    <scope>NUCLEOTIDE SEQUENCE [LARGE SCALE GENOMIC DNA]</scope>
    <scope>FUNCTION</scope>
</reference>
<name>ILIE_NEOS2</name>
<feature type="chain" id="PRO_0000453071" description="NADH-dependent flavin oxidoreductase iliE">
    <location>
        <begin position="1"/>
        <end position="766"/>
    </location>
</feature>
<feature type="transmembrane region" description="Helical" evidence="2">
    <location>
        <begin position="675"/>
        <end position="695"/>
    </location>
</feature>
<feature type="domain" description="J" evidence="3">
    <location>
        <begin position="551"/>
        <end position="622"/>
    </location>
</feature>
<feature type="region of interest" description="Disordered" evidence="5">
    <location>
        <begin position="1"/>
        <end position="24"/>
    </location>
</feature>
<feature type="compositionally biased region" description="Polar residues" evidence="5">
    <location>
        <begin position="1"/>
        <end position="13"/>
    </location>
</feature>
<feature type="compositionally biased region" description="Basic and acidic residues" evidence="5">
    <location>
        <begin position="14"/>
        <end position="24"/>
    </location>
</feature>
<feature type="binding site" evidence="1">
    <location>
        <begin position="61"/>
        <end position="64"/>
    </location>
    <ligand>
        <name>FMN</name>
        <dbReference type="ChEBI" id="CHEBI:58210"/>
    </ligand>
</feature>
<feature type="binding site" evidence="1">
    <location>
        <position position="143"/>
    </location>
    <ligand>
        <name>FMN</name>
        <dbReference type="ChEBI" id="CHEBI:58210"/>
    </ligand>
</feature>
<feature type="binding site" evidence="1">
    <location>
        <begin position="224"/>
        <end position="227"/>
    </location>
    <ligand>
        <name>substrate</name>
    </ligand>
</feature>
<feature type="binding site" evidence="1">
    <location>
        <begin position="385"/>
        <end position="386"/>
    </location>
    <ligand>
        <name>FMN</name>
        <dbReference type="ChEBI" id="CHEBI:58210"/>
    </ligand>
</feature>
<feature type="glycosylation site" description="N-linked (GlcNAc...) asparagine" evidence="4">
    <location>
        <position position="30"/>
    </location>
</feature>
<feature type="glycosylation site" description="N-linked (GlcNAc...) asparagine" evidence="4">
    <location>
        <position position="70"/>
    </location>
</feature>
<feature type="glycosylation site" description="N-linked (GlcNAc...) asparagine" evidence="4">
    <location>
        <position position="136"/>
    </location>
</feature>
<feature type="glycosylation site" description="N-linked (GlcNAc...) asparagine" evidence="4">
    <location>
        <position position="634"/>
    </location>
</feature>
<feature type="glycosylation site" description="N-linked (GlcNAc...) asparagine" evidence="4">
    <location>
        <position position="650"/>
    </location>
</feature>
<feature type="glycosylation site" description="N-linked (GlcNAc...) asparagine" evidence="4">
    <location>
        <position position="654"/>
    </location>
</feature>